<proteinExistence type="inferred from homology"/>
<accession>A6W199</accession>
<keyword id="KW-0975">Bacterial flagellum</keyword>
<keyword id="KW-0574">Periplasm</keyword>
<keyword id="KW-0732">Signal</keyword>
<reference key="1">
    <citation type="submission" date="2007-06" db="EMBL/GenBank/DDBJ databases">
        <title>Complete sequence of Marinomonas sp. MWYL1.</title>
        <authorList>
            <consortium name="US DOE Joint Genome Institute"/>
            <person name="Copeland A."/>
            <person name="Lucas S."/>
            <person name="Lapidus A."/>
            <person name="Barry K."/>
            <person name="Glavina del Rio T."/>
            <person name="Dalin E."/>
            <person name="Tice H."/>
            <person name="Pitluck S."/>
            <person name="Kiss H."/>
            <person name="Brettin T."/>
            <person name="Bruce D."/>
            <person name="Detter J.C."/>
            <person name="Han C."/>
            <person name="Schmutz J."/>
            <person name="Larimer F."/>
            <person name="Land M."/>
            <person name="Hauser L."/>
            <person name="Kyrpides N."/>
            <person name="Kim E."/>
            <person name="Johnston A.W.B."/>
            <person name="Todd J.D."/>
            <person name="Rogers R."/>
            <person name="Wexler M."/>
            <person name="Bond P.L."/>
            <person name="Li Y."/>
            <person name="Richardson P."/>
        </authorList>
    </citation>
    <scope>NUCLEOTIDE SEQUENCE [LARGE SCALE GENOMIC DNA]</scope>
    <source>
        <strain>MWYL1</strain>
    </source>
</reference>
<comment type="function">
    <text evidence="1">Assembles around the rod to form the L-ring and probably protects the motor/basal body from shearing forces during rotation.</text>
</comment>
<comment type="subunit">
    <text evidence="1">The basal body constitutes a major portion of the flagellar organelle and consists of four rings (L,P,S, and M) mounted on a central rod.</text>
</comment>
<comment type="subcellular location">
    <subcellularLocation>
        <location evidence="1">Periplasm</location>
    </subcellularLocation>
    <subcellularLocation>
        <location evidence="1">Bacterial flagellum basal body</location>
    </subcellularLocation>
</comment>
<comment type="similarity">
    <text evidence="1">Belongs to the FlgI family.</text>
</comment>
<organism>
    <name type="scientific">Marinomonas sp. (strain MWYL1)</name>
    <dbReference type="NCBI Taxonomy" id="400668"/>
    <lineage>
        <taxon>Bacteria</taxon>
        <taxon>Pseudomonadati</taxon>
        <taxon>Pseudomonadota</taxon>
        <taxon>Gammaproteobacteria</taxon>
        <taxon>Oceanospirillales</taxon>
        <taxon>Oceanospirillaceae</taxon>
        <taxon>Marinomonas</taxon>
    </lineage>
</organism>
<evidence type="ECO:0000255" key="1">
    <source>
        <dbReference type="HAMAP-Rule" id="MF_00416"/>
    </source>
</evidence>
<gene>
    <name evidence="1" type="primary">flgI</name>
    <name type="ordered locus">Mmwyl1_3576</name>
</gene>
<name>FLGI_MARMS</name>
<sequence length="362" mass="37371">MKHIALIVLYFLSFSVQAERLKDIASVQGVRENQLFGYGLVIGLNGTGDSTAFTNQSFVSMLSRFGVTLPEGVNATSKNVAAVSLTATLPAFSKPGQKIDVTVSSIGNASALRGGTLLLSTLKGADGAVYAIAQGNLVVGGLGANGADGSRTTGNVPTVGRIPNGASVERIVPSSFNTGDTLTFNLNRPDFTTAKQVTDKINNLLGPGVATTLDATSIRVSAPRDSSQRVTYLSILENLDVEVAEERARIVVNSRTGTIIIGQHVKVSPAAITHGSLTVTIKEVPPVVGKDGTITGGQTIVSPREGIEIAPNSGHMFVFDPGASLDDIVRAVNQVGAAPGDVMAILEGLKQAGAINADLVVI</sequence>
<dbReference type="EMBL" id="CP000749">
    <property type="protein sequence ID" value="ABR72478.1"/>
    <property type="molecule type" value="Genomic_DNA"/>
</dbReference>
<dbReference type="SMR" id="A6W199"/>
<dbReference type="STRING" id="400668.Mmwyl1_3576"/>
<dbReference type="KEGG" id="mmw:Mmwyl1_3576"/>
<dbReference type="eggNOG" id="COG1706">
    <property type="taxonomic scope" value="Bacteria"/>
</dbReference>
<dbReference type="HOGENOM" id="CLU_045235_1_0_6"/>
<dbReference type="OrthoDB" id="9786431at2"/>
<dbReference type="GO" id="GO:0009428">
    <property type="term" value="C:bacterial-type flagellum basal body, distal rod, P ring"/>
    <property type="evidence" value="ECO:0007669"/>
    <property type="project" value="InterPro"/>
</dbReference>
<dbReference type="GO" id="GO:0030288">
    <property type="term" value="C:outer membrane-bounded periplasmic space"/>
    <property type="evidence" value="ECO:0007669"/>
    <property type="project" value="InterPro"/>
</dbReference>
<dbReference type="GO" id="GO:0005198">
    <property type="term" value="F:structural molecule activity"/>
    <property type="evidence" value="ECO:0007669"/>
    <property type="project" value="InterPro"/>
</dbReference>
<dbReference type="GO" id="GO:0071973">
    <property type="term" value="P:bacterial-type flagellum-dependent cell motility"/>
    <property type="evidence" value="ECO:0007669"/>
    <property type="project" value="InterPro"/>
</dbReference>
<dbReference type="HAMAP" id="MF_00416">
    <property type="entry name" value="FlgI"/>
    <property type="match status" value="1"/>
</dbReference>
<dbReference type="InterPro" id="IPR001782">
    <property type="entry name" value="Flag_FlgI"/>
</dbReference>
<dbReference type="NCBIfam" id="NF003676">
    <property type="entry name" value="PRK05303.1"/>
    <property type="match status" value="1"/>
</dbReference>
<dbReference type="PANTHER" id="PTHR30381">
    <property type="entry name" value="FLAGELLAR P-RING PERIPLASMIC PROTEIN FLGI"/>
    <property type="match status" value="1"/>
</dbReference>
<dbReference type="PANTHER" id="PTHR30381:SF0">
    <property type="entry name" value="FLAGELLAR P-RING PROTEIN"/>
    <property type="match status" value="1"/>
</dbReference>
<dbReference type="Pfam" id="PF02119">
    <property type="entry name" value="FlgI"/>
    <property type="match status" value="1"/>
</dbReference>
<dbReference type="PRINTS" id="PR01010">
    <property type="entry name" value="FLGPRINGFLGI"/>
</dbReference>
<protein>
    <recommendedName>
        <fullName evidence="1">Flagellar P-ring protein</fullName>
    </recommendedName>
    <alternativeName>
        <fullName evidence="1">Basal body P-ring protein</fullName>
    </alternativeName>
</protein>
<feature type="signal peptide" evidence="1">
    <location>
        <begin position="1"/>
        <end position="18"/>
    </location>
</feature>
<feature type="chain" id="PRO_5000259656" description="Flagellar P-ring protein">
    <location>
        <begin position="19"/>
        <end position="362"/>
    </location>
</feature>